<dbReference type="EC" id="5.3.1.14" evidence="1"/>
<dbReference type="EMBL" id="CP001396">
    <property type="protein sequence ID" value="ACR63673.1"/>
    <property type="molecule type" value="Genomic_DNA"/>
</dbReference>
<dbReference type="RefSeq" id="WP_001311268.1">
    <property type="nucleotide sequence ID" value="NC_012759.1"/>
</dbReference>
<dbReference type="SMR" id="C5A071"/>
<dbReference type="KEGG" id="ebw:BWG_3573"/>
<dbReference type="HOGENOM" id="CLU_052790_0_0_6"/>
<dbReference type="UniPathway" id="UPA00541">
    <property type="reaction ID" value="UER00601"/>
</dbReference>
<dbReference type="GO" id="GO:0005737">
    <property type="term" value="C:cytoplasm"/>
    <property type="evidence" value="ECO:0007669"/>
    <property type="project" value="UniProtKB-SubCell"/>
</dbReference>
<dbReference type="GO" id="GO:0008740">
    <property type="term" value="F:L-rhamnose isomerase activity"/>
    <property type="evidence" value="ECO:0007669"/>
    <property type="project" value="UniProtKB-UniRule"/>
</dbReference>
<dbReference type="GO" id="GO:0030145">
    <property type="term" value="F:manganese ion binding"/>
    <property type="evidence" value="ECO:0007669"/>
    <property type="project" value="UniProtKB-UniRule"/>
</dbReference>
<dbReference type="GO" id="GO:0019324">
    <property type="term" value="P:L-lyxose metabolic process"/>
    <property type="evidence" value="ECO:0007669"/>
    <property type="project" value="TreeGrafter"/>
</dbReference>
<dbReference type="GO" id="GO:0019301">
    <property type="term" value="P:rhamnose catabolic process"/>
    <property type="evidence" value="ECO:0007669"/>
    <property type="project" value="UniProtKB-UniRule"/>
</dbReference>
<dbReference type="FunFam" id="3.20.20.150:FF:000006">
    <property type="entry name" value="L-rhamnose isomerase"/>
    <property type="match status" value="1"/>
</dbReference>
<dbReference type="Gene3D" id="3.20.20.150">
    <property type="entry name" value="Divalent-metal-dependent TIM barrel enzymes"/>
    <property type="match status" value="1"/>
</dbReference>
<dbReference type="HAMAP" id="MF_00541">
    <property type="entry name" value="RhaA"/>
    <property type="match status" value="1"/>
</dbReference>
<dbReference type="InterPro" id="IPR050337">
    <property type="entry name" value="L-rhamnose_isomerase"/>
</dbReference>
<dbReference type="InterPro" id="IPR009308">
    <property type="entry name" value="Rhamnose_isomerase"/>
</dbReference>
<dbReference type="InterPro" id="IPR036237">
    <property type="entry name" value="Xyl_isomerase-like_sf"/>
</dbReference>
<dbReference type="NCBIfam" id="NF002203">
    <property type="entry name" value="PRK01076.1"/>
    <property type="match status" value="1"/>
</dbReference>
<dbReference type="NCBIfam" id="TIGR01748">
    <property type="entry name" value="rhaA"/>
    <property type="match status" value="1"/>
</dbReference>
<dbReference type="PANTHER" id="PTHR30268">
    <property type="entry name" value="L-RHAMNOSE ISOMERASE"/>
    <property type="match status" value="1"/>
</dbReference>
<dbReference type="PANTHER" id="PTHR30268:SF0">
    <property type="entry name" value="L-RHAMNOSE ISOMERASE"/>
    <property type="match status" value="1"/>
</dbReference>
<dbReference type="Pfam" id="PF06134">
    <property type="entry name" value="RhaA"/>
    <property type="match status" value="1"/>
</dbReference>
<dbReference type="SUPFAM" id="SSF51658">
    <property type="entry name" value="Xylose isomerase-like"/>
    <property type="match status" value="1"/>
</dbReference>
<name>RHAA_ECOBW</name>
<evidence type="ECO:0000255" key="1">
    <source>
        <dbReference type="HAMAP-Rule" id="MF_00541"/>
    </source>
</evidence>
<organism>
    <name type="scientific">Escherichia coli (strain K12 / MC4100 / BW2952)</name>
    <dbReference type="NCBI Taxonomy" id="595496"/>
    <lineage>
        <taxon>Bacteria</taxon>
        <taxon>Pseudomonadati</taxon>
        <taxon>Pseudomonadota</taxon>
        <taxon>Gammaproteobacteria</taxon>
        <taxon>Enterobacterales</taxon>
        <taxon>Enterobacteriaceae</taxon>
        <taxon>Escherichia</taxon>
    </lineage>
</organism>
<sequence>MTTQLEQAWELAKQRFAAVGIDVEEALRQLDRLPVSMHCWQGDDVSGFENPEGSLTGGIQATGNYPGKARNASELRADLEQAMRLIPGPKRLNLHAIYLESDTPVSRDQIKPEHFKNWVEWAKANQLGLDFNPSCFSHPLSADGFTLSHADDSIRQFWIDHCKASRRVSAYFGEQLGTPSVMNIWIPDGMKDITVDRLAPRQRLLAALDEVISEKLNPAHHIDAVESKLFGIGAESYTVGSNEFYMGYATSRQTALCLDAGHFHPTEVISDKISAAMLYVPQLLLHVSRPVRWDSDHVVLLDDETQAIASEIVRHDLFDRVHIGLDFFDASINRIAAWVIGTRNMKKALLRALLEPTAELRKLEAAGDYTARLALLEEQKSLPWQAVWEMYCQRHDTPAGSEWLESVRAYEKEILSRRG</sequence>
<accession>C5A071</accession>
<feature type="chain" id="PRO_1000211952" description="L-rhamnose isomerase">
    <location>
        <begin position="1"/>
        <end position="419"/>
    </location>
</feature>
<feature type="binding site" evidence="1">
    <location>
        <position position="262"/>
    </location>
    <ligand>
        <name>Mn(2+)</name>
        <dbReference type="ChEBI" id="CHEBI:29035"/>
    </ligand>
</feature>
<feature type="binding site" evidence="1">
    <location>
        <position position="294"/>
    </location>
    <ligand>
        <name>Mn(2+)</name>
        <dbReference type="ChEBI" id="CHEBI:29035"/>
    </ligand>
</feature>
<feature type="binding site" evidence="1">
    <location>
        <position position="296"/>
    </location>
    <ligand>
        <name>Mn(2+)</name>
        <dbReference type="ChEBI" id="CHEBI:29035"/>
    </ligand>
</feature>
<keyword id="KW-0963">Cytoplasm</keyword>
<keyword id="KW-0413">Isomerase</keyword>
<keyword id="KW-0464">Manganese</keyword>
<keyword id="KW-0479">Metal-binding</keyword>
<keyword id="KW-0684">Rhamnose metabolism</keyword>
<reference key="1">
    <citation type="journal article" date="2009" name="J. Bacteriol.">
        <title>Genomic sequencing reveals regulatory mutations and recombinational events in the widely used MC4100 lineage of Escherichia coli K-12.</title>
        <authorList>
            <person name="Ferenci T."/>
            <person name="Zhou Z."/>
            <person name="Betteridge T."/>
            <person name="Ren Y."/>
            <person name="Liu Y."/>
            <person name="Feng L."/>
            <person name="Reeves P.R."/>
            <person name="Wang L."/>
        </authorList>
    </citation>
    <scope>NUCLEOTIDE SEQUENCE [LARGE SCALE GENOMIC DNA]</scope>
    <source>
        <strain>K12 / MC4100 / BW2952</strain>
    </source>
</reference>
<protein>
    <recommendedName>
        <fullName evidence="1">L-rhamnose isomerase</fullName>
        <ecNumber evidence="1">5.3.1.14</ecNumber>
    </recommendedName>
</protein>
<comment type="function">
    <text evidence="1">Catalyzes the interconversion of L-rhamnose and L-rhamnulose.</text>
</comment>
<comment type="catalytic activity">
    <reaction evidence="1">
        <text>L-rhamnopyranose = L-rhamnulose</text>
        <dbReference type="Rhea" id="RHEA:23160"/>
        <dbReference type="ChEBI" id="CHEBI:17897"/>
        <dbReference type="ChEBI" id="CHEBI:62346"/>
        <dbReference type="EC" id="5.3.1.14"/>
    </reaction>
</comment>
<comment type="cofactor">
    <cofactor evidence="1">
        <name>Mn(2+)</name>
        <dbReference type="ChEBI" id="CHEBI:29035"/>
    </cofactor>
    <text evidence="1">Binds 1 Mn(2+) ion per subunit.</text>
</comment>
<comment type="pathway">
    <text evidence="1">Carbohydrate degradation; L-rhamnose degradation; glycerone phosphate from L-rhamnose: step 1/3.</text>
</comment>
<comment type="subunit">
    <text evidence="1">Homotetramer.</text>
</comment>
<comment type="subcellular location">
    <subcellularLocation>
        <location evidence="1">Cytoplasm</location>
    </subcellularLocation>
</comment>
<comment type="similarity">
    <text evidence="1">Belongs to the rhamnose isomerase family.</text>
</comment>
<gene>
    <name evidence="1" type="primary">rhaA</name>
    <name type="ordered locus">BWG_3573</name>
</gene>
<proteinExistence type="inferred from homology"/>